<proteinExistence type="inferred from homology"/>
<organism>
    <name type="scientific">Legionella pneumophila (strain Corby)</name>
    <dbReference type="NCBI Taxonomy" id="400673"/>
    <lineage>
        <taxon>Bacteria</taxon>
        <taxon>Pseudomonadati</taxon>
        <taxon>Pseudomonadota</taxon>
        <taxon>Gammaproteobacteria</taxon>
        <taxon>Legionellales</taxon>
        <taxon>Legionellaceae</taxon>
        <taxon>Legionella</taxon>
    </lineage>
</organism>
<gene>
    <name evidence="2" type="primary">ddl</name>
    <name type="ordered locus">LPC_0529</name>
</gene>
<comment type="function">
    <text evidence="2">Cell wall formation.</text>
</comment>
<comment type="catalytic activity">
    <reaction evidence="2">
        <text>2 D-alanine + ATP = D-alanyl-D-alanine + ADP + phosphate + H(+)</text>
        <dbReference type="Rhea" id="RHEA:11224"/>
        <dbReference type="ChEBI" id="CHEBI:15378"/>
        <dbReference type="ChEBI" id="CHEBI:30616"/>
        <dbReference type="ChEBI" id="CHEBI:43474"/>
        <dbReference type="ChEBI" id="CHEBI:57416"/>
        <dbReference type="ChEBI" id="CHEBI:57822"/>
        <dbReference type="ChEBI" id="CHEBI:456216"/>
        <dbReference type="EC" id="6.3.2.4"/>
    </reaction>
</comment>
<comment type="cofactor">
    <cofactor evidence="1">
        <name>Mg(2+)</name>
        <dbReference type="ChEBI" id="CHEBI:18420"/>
    </cofactor>
    <cofactor evidence="1">
        <name>Mn(2+)</name>
        <dbReference type="ChEBI" id="CHEBI:29035"/>
    </cofactor>
    <text evidence="1">Binds 2 magnesium or manganese ions per subunit.</text>
</comment>
<comment type="pathway">
    <text evidence="2">Cell wall biogenesis; peptidoglycan biosynthesis.</text>
</comment>
<comment type="subcellular location">
    <subcellularLocation>
        <location evidence="2">Cytoplasm</location>
    </subcellularLocation>
</comment>
<comment type="similarity">
    <text evidence="2">Belongs to the D-alanine--D-alanine ligase family.</text>
</comment>
<keyword id="KW-0067">ATP-binding</keyword>
<keyword id="KW-0133">Cell shape</keyword>
<keyword id="KW-0961">Cell wall biogenesis/degradation</keyword>
<keyword id="KW-0963">Cytoplasm</keyword>
<keyword id="KW-0436">Ligase</keyword>
<keyword id="KW-0460">Magnesium</keyword>
<keyword id="KW-0464">Manganese</keyword>
<keyword id="KW-0479">Metal-binding</keyword>
<keyword id="KW-0547">Nucleotide-binding</keyword>
<keyword id="KW-0573">Peptidoglycan synthesis</keyword>
<reference key="1">
    <citation type="submission" date="2006-11" db="EMBL/GenBank/DDBJ databases">
        <title>Identification and characterization of a new conjugation/ type IVA secretion system (trb/tra) of L. pneumophila Corby localized on a mobile genomic island.</title>
        <authorList>
            <person name="Gloeckner G."/>
            <person name="Albert-Weissenberger C."/>
            <person name="Weinmann E."/>
            <person name="Jacobi S."/>
            <person name="Schunder E."/>
            <person name="Steinert M."/>
            <person name="Buchrieser C."/>
            <person name="Hacker J."/>
            <person name="Heuner K."/>
        </authorList>
    </citation>
    <scope>NUCLEOTIDE SEQUENCE [LARGE SCALE GENOMIC DNA]</scope>
    <source>
        <strain>Corby</strain>
    </source>
</reference>
<evidence type="ECO:0000250" key="1"/>
<evidence type="ECO:0000255" key="2">
    <source>
        <dbReference type="HAMAP-Rule" id="MF_00047"/>
    </source>
</evidence>
<name>DDL_LEGPC</name>
<protein>
    <recommendedName>
        <fullName evidence="2">D-alanine--D-alanine ligase</fullName>
        <ecNumber evidence="2">6.3.2.4</ecNumber>
    </recommendedName>
    <alternativeName>
        <fullName evidence="2">D-Ala-D-Ala ligase</fullName>
    </alternativeName>
    <alternativeName>
        <fullName evidence="2">D-alanylalanine synthetase</fullName>
    </alternativeName>
</protein>
<dbReference type="EC" id="6.3.2.4" evidence="2"/>
<dbReference type="EMBL" id="CP000675">
    <property type="protein sequence ID" value="ABQ54514.1"/>
    <property type="molecule type" value="Genomic_DNA"/>
</dbReference>
<dbReference type="RefSeq" id="WP_011947531.1">
    <property type="nucleotide sequence ID" value="NZ_JAPMSS010000010.1"/>
</dbReference>
<dbReference type="SMR" id="A5IAW4"/>
<dbReference type="KEGG" id="lpc:LPC_0529"/>
<dbReference type="HOGENOM" id="CLU_039268_0_0_6"/>
<dbReference type="UniPathway" id="UPA00219"/>
<dbReference type="GO" id="GO:0005829">
    <property type="term" value="C:cytosol"/>
    <property type="evidence" value="ECO:0007669"/>
    <property type="project" value="TreeGrafter"/>
</dbReference>
<dbReference type="GO" id="GO:0005524">
    <property type="term" value="F:ATP binding"/>
    <property type="evidence" value="ECO:0007669"/>
    <property type="project" value="UniProtKB-KW"/>
</dbReference>
<dbReference type="GO" id="GO:0008716">
    <property type="term" value="F:D-alanine-D-alanine ligase activity"/>
    <property type="evidence" value="ECO:0007669"/>
    <property type="project" value="UniProtKB-UniRule"/>
</dbReference>
<dbReference type="GO" id="GO:0046872">
    <property type="term" value="F:metal ion binding"/>
    <property type="evidence" value="ECO:0007669"/>
    <property type="project" value="UniProtKB-KW"/>
</dbReference>
<dbReference type="GO" id="GO:0071555">
    <property type="term" value="P:cell wall organization"/>
    <property type="evidence" value="ECO:0007669"/>
    <property type="project" value="UniProtKB-KW"/>
</dbReference>
<dbReference type="GO" id="GO:0009252">
    <property type="term" value="P:peptidoglycan biosynthetic process"/>
    <property type="evidence" value="ECO:0007669"/>
    <property type="project" value="UniProtKB-UniRule"/>
</dbReference>
<dbReference type="GO" id="GO:0008360">
    <property type="term" value="P:regulation of cell shape"/>
    <property type="evidence" value="ECO:0007669"/>
    <property type="project" value="UniProtKB-KW"/>
</dbReference>
<dbReference type="FunFam" id="3.30.1490.20:FF:000007">
    <property type="entry name" value="D-alanine--D-alanine ligase"/>
    <property type="match status" value="1"/>
</dbReference>
<dbReference type="FunFam" id="3.30.470.20:FF:000008">
    <property type="entry name" value="D-alanine--D-alanine ligase"/>
    <property type="match status" value="1"/>
</dbReference>
<dbReference type="Gene3D" id="3.40.50.20">
    <property type="match status" value="1"/>
</dbReference>
<dbReference type="Gene3D" id="3.30.1490.20">
    <property type="entry name" value="ATP-grasp fold, A domain"/>
    <property type="match status" value="1"/>
</dbReference>
<dbReference type="Gene3D" id="3.30.470.20">
    <property type="entry name" value="ATP-grasp fold, B domain"/>
    <property type="match status" value="1"/>
</dbReference>
<dbReference type="HAMAP" id="MF_00047">
    <property type="entry name" value="Dala_Dala_lig"/>
    <property type="match status" value="1"/>
</dbReference>
<dbReference type="InterPro" id="IPR011761">
    <property type="entry name" value="ATP-grasp"/>
</dbReference>
<dbReference type="InterPro" id="IPR013815">
    <property type="entry name" value="ATP_grasp_subdomain_1"/>
</dbReference>
<dbReference type="InterPro" id="IPR000291">
    <property type="entry name" value="D-Ala_lig_Van_CS"/>
</dbReference>
<dbReference type="InterPro" id="IPR005905">
    <property type="entry name" value="D_ala_D_ala"/>
</dbReference>
<dbReference type="InterPro" id="IPR011095">
    <property type="entry name" value="Dala_Dala_lig_C"/>
</dbReference>
<dbReference type="InterPro" id="IPR011127">
    <property type="entry name" value="Dala_Dala_lig_N"/>
</dbReference>
<dbReference type="InterPro" id="IPR016185">
    <property type="entry name" value="PreATP-grasp_dom_sf"/>
</dbReference>
<dbReference type="NCBIfam" id="TIGR01205">
    <property type="entry name" value="D_ala_D_alaTIGR"/>
    <property type="match status" value="1"/>
</dbReference>
<dbReference type="NCBIfam" id="NF002528">
    <property type="entry name" value="PRK01966.1-4"/>
    <property type="match status" value="1"/>
</dbReference>
<dbReference type="PANTHER" id="PTHR23132">
    <property type="entry name" value="D-ALANINE--D-ALANINE LIGASE"/>
    <property type="match status" value="1"/>
</dbReference>
<dbReference type="PANTHER" id="PTHR23132:SF25">
    <property type="entry name" value="D-ALANINE--D-ALANINE LIGASE A"/>
    <property type="match status" value="1"/>
</dbReference>
<dbReference type="Pfam" id="PF07478">
    <property type="entry name" value="Dala_Dala_lig_C"/>
    <property type="match status" value="1"/>
</dbReference>
<dbReference type="Pfam" id="PF01820">
    <property type="entry name" value="Dala_Dala_lig_N"/>
    <property type="match status" value="1"/>
</dbReference>
<dbReference type="PIRSF" id="PIRSF039102">
    <property type="entry name" value="Ddl/VanB"/>
    <property type="match status" value="1"/>
</dbReference>
<dbReference type="SUPFAM" id="SSF56059">
    <property type="entry name" value="Glutathione synthetase ATP-binding domain-like"/>
    <property type="match status" value="1"/>
</dbReference>
<dbReference type="SUPFAM" id="SSF52440">
    <property type="entry name" value="PreATP-grasp domain"/>
    <property type="match status" value="1"/>
</dbReference>
<dbReference type="PROSITE" id="PS50975">
    <property type="entry name" value="ATP_GRASP"/>
    <property type="match status" value="1"/>
</dbReference>
<dbReference type="PROSITE" id="PS00844">
    <property type="entry name" value="DALA_DALA_LIGASE_2"/>
    <property type="match status" value="1"/>
</dbReference>
<accession>A5IAW4</accession>
<sequence length="364" mass="40409">MSKPVNLVLLYGGKSGEHEVSLVSAASVLKHLDSEKYHIIPIAMDKSGRFHRHDYNDLLACSDKLPVVTEKSTPLEGLLINGRLAVDAEIVFPVVHGPLYEDGCLQGLLELAGVAYVGCDVLSSAIGMDKDMARRLACINGLKSARYKLLSWHANASERQQFCHEVASEFGWPLFVKPCSLGSSVGIHKANNMDELNAAVADALRYDEEILVEEFIVGREIELAVLENSIPCGKPRVSMVGEIKVNHPDGYYSYTAKYLESSQTDLIIPAQLNNSLEEQLKQAAANIFSYLKCKGMARVDFFVNDKTEEIYFNEINTLPGFTSISMYPKLWQATGVAYPDLLDELINLAMVHHNCRQHLVTNYL</sequence>
<feature type="chain" id="PRO_1000030459" description="D-alanine--D-alanine ligase">
    <location>
        <begin position="1"/>
        <end position="364"/>
    </location>
</feature>
<feature type="domain" description="ATP-grasp" evidence="2">
    <location>
        <begin position="134"/>
        <end position="347"/>
    </location>
</feature>
<feature type="binding site" evidence="2">
    <location>
        <begin position="167"/>
        <end position="222"/>
    </location>
    <ligand>
        <name>ATP</name>
        <dbReference type="ChEBI" id="CHEBI:30616"/>
    </ligand>
</feature>
<feature type="binding site" evidence="2">
    <location>
        <position position="300"/>
    </location>
    <ligand>
        <name>Mg(2+)</name>
        <dbReference type="ChEBI" id="CHEBI:18420"/>
        <label>1</label>
    </ligand>
</feature>
<feature type="binding site" evidence="2">
    <location>
        <position position="314"/>
    </location>
    <ligand>
        <name>Mg(2+)</name>
        <dbReference type="ChEBI" id="CHEBI:18420"/>
        <label>1</label>
    </ligand>
</feature>
<feature type="binding site" evidence="2">
    <location>
        <position position="314"/>
    </location>
    <ligand>
        <name>Mg(2+)</name>
        <dbReference type="ChEBI" id="CHEBI:18420"/>
        <label>2</label>
    </ligand>
</feature>
<feature type="binding site" evidence="2">
    <location>
        <position position="316"/>
    </location>
    <ligand>
        <name>Mg(2+)</name>
        <dbReference type="ChEBI" id="CHEBI:18420"/>
        <label>2</label>
    </ligand>
</feature>